<feature type="initiator methionine" description="Removed" evidence="1">
    <location>
        <position position="1"/>
    </location>
</feature>
<feature type="chain" id="PRO_0000389331" description="Small ribosomal subunit protein eS1">
    <location>
        <begin position="2"/>
        <end position="260"/>
    </location>
</feature>
<feature type="region of interest" description="Disordered" evidence="2">
    <location>
        <begin position="1"/>
        <end position="20"/>
    </location>
</feature>
<feature type="compositionally biased region" description="Basic residues" evidence="2">
    <location>
        <begin position="1"/>
        <end position="18"/>
    </location>
</feature>
<comment type="subunit">
    <text evidence="1">Component of the small ribosomal subunit. Mature ribosomes consist of a small (40S) and a large (60S) subunit. The 40S subunit contains about 33 different proteins and 1 molecule of RNA (18S). The 60S subunit contains about 49 different proteins and 3 molecules of RNA (25S, 5.8S and 5S).</text>
</comment>
<comment type="subcellular location">
    <subcellularLocation>
        <location evidence="1">Cytoplasm</location>
    </subcellularLocation>
</comment>
<comment type="similarity">
    <text evidence="1">Belongs to the eukaryotic ribosomal protein eS1 family.</text>
</comment>
<evidence type="ECO:0000255" key="1">
    <source>
        <dbReference type="HAMAP-Rule" id="MF_03122"/>
    </source>
</evidence>
<evidence type="ECO:0000256" key="2">
    <source>
        <dbReference type="SAM" id="MobiDB-lite"/>
    </source>
</evidence>
<evidence type="ECO:0000305" key="3"/>
<dbReference type="EMBL" id="CP000599">
    <property type="protein sequence ID" value="ABP00683.1"/>
    <property type="molecule type" value="Genomic_DNA"/>
</dbReference>
<dbReference type="SMR" id="A4SAD2"/>
<dbReference type="STRING" id="436017.A4SAD2"/>
<dbReference type="EnsemblPlants" id="ABP00683">
    <property type="protein sequence ID" value="ABP00683"/>
    <property type="gene ID" value="OSTLU_28528"/>
</dbReference>
<dbReference type="Gramene" id="ABP00683">
    <property type="protein sequence ID" value="ABP00683"/>
    <property type="gene ID" value="OSTLU_28528"/>
</dbReference>
<dbReference type="KEGG" id="olu:OSTLU_28528"/>
<dbReference type="eggNOG" id="KOG1628">
    <property type="taxonomic scope" value="Eukaryota"/>
</dbReference>
<dbReference type="HOGENOM" id="CLU_062507_0_0_1"/>
<dbReference type="OMA" id="MCEIITR"/>
<dbReference type="OrthoDB" id="9834376at2759"/>
<dbReference type="Proteomes" id="UP000001568">
    <property type="component" value="Chromosome 19"/>
</dbReference>
<dbReference type="GO" id="GO:0022627">
    <property type="term" value="C:cytosolic small ribosomal subunit"/>
    <property type="evidence" value="ECO:0007669"/>
    <property type="project" value="UniProtKB-UniRule"/>
</dbReference>
<dbReference type="GO" id="GO:0003735">
    <property type="term" value="F:structural constituent of ribosome"/>
    <property type="evidence" value="ECO:0007669"/>
    <property type="project" value="UniProtKB-UniRule"/>
</dbReference>
<dbReference type="GO" id="GO:0006412">
    <property type="term" value="P:translation"/>
    <property type="evidence" value="ECO:0007669"/>
    <property type="project" value="UniProtKB-UniRule"/>
</dbReference>
<dbReference type="HAMAP" id="MF_03122">
    <property type="entry name" value="Ribosomal_eS1_euk"/>
    <property type="match status" value="1"/>
</dbReference>
<dbReference type="InterPro" id="IPR001593">
    <property type="entry name" value="Ribosomal_eS1"/>
</dbReference>
<dbReference type="InterPro" id="IPR018281">
    <property type="entry name" value="Ribosomal_eS1_CS"/>
</dbReference>
<dbReference type="InterPro" id="IPR027500">
    <property type="entry name" value="Ribosomal_eS1_euk"/>
</dbReference>
<dbReference type="PANTHER" id="PTHR11830">
    <property type="entry name" value="40S RIBOSOMAL PROTEIN S3A"/>
    <property type="match status" value="1"/>
</dbReference>
<dbReference type="Pfam" id="PF01015">
    <property type="entry name" value="Ribosomal_S3Ae"/>
    <property type="match status" value="1"/>
</dbReference>
<dbReference type="SMART" id="SM01397">
    <property type="entry name" value="Ribosomal_S3Ae"/>
    <property type="match status" value="1"/>
</dbReference>
<dbReference type="PROSITE" id="PS01191">
    <property type="entry name" value="RIBOSOMAL_S3AE"/>
    <property type="match status" value="1"/>
</dbReference>
<protein>
    <recommendedName>
        <fullName evidence="1">Small ribosomal subunit protein eS1</fullName>
    </recommendedName>
    <alternativeName>
        <fullName evidence="3">40S ribosomal protein S3a</fullName>
    </alternativeName>
</protein>
<keyword id="KW-0963">Cytoplasm</keyword>
<keyword id="KW-1185">Reference proteome</keyword>
<keyword id="KW-0687">Ribonucleoprotein</keyword>
<keyword id="KW-0689">Ribosomal protein</keyword>
<gene>
    <name type="ORF">OSTLU_28528</name>
</gene>
<name>RS3A_OSTLU</name>
<proteinExistence type="inferred from homology"/>
<sequence length="260" mass="29417">MAVGKNKRMSKGKKGGKKKAVDPFTKKDWYDIKAPSMFSVRNIGKTLVSRTQGTKIASDGLKGRIFEISLADLNNDEDQSFRKMKLKCEDVQGKNVLTNFAGMDFTTDKIRSLVRKWFSLIECFVDVKTTDGYTLRVFCIGFTKRRMDQAKRTCYAQSAQIRKIRAKMVEIITRECTTCDLKELVLKFIPEVIGKEIEKSCAGIYPLQNVYIRKVKILKAPKFDLTKLMEVHGDYSGEAVGEAVARPVEEKAEETAEAAE</sequence>
<reference key="1">
    <citation type="journal article" date="2007" name="Proc. Natl. Acad. Sci. U.S.A.">
        <title>The tiny eukaryote Ostreococcus provides genomic insights into the paradox of plankton speciation.</title>
        <authorList>
            <person name="Palenik B."/>
            <person name="Grimwood J."/>
            <person name="Aerts A."/>
            <person name="Rouze P."/>
            <person name="Salamov A."/>
            <person name="Putnam N."/>
            <person name="Dupont C."/>
            <person name="Jorgensen R."/>
            <person name="Derelle E."/>
            <person name="Rombauts S."/>
            <person name="Zhou K."/>
            <person name="Otillar R."/>
            <person name="Merchant S.S."/>
            <person name="Podell S."/>
            <person name="Gaasterland T."/>
            <person name="Napoli C."/>
            <person name="Gendler K."/>
            <person name="Manuell A."/>
            <person name="Tai V."/>
            <person name="Vallon O."/>
            <person name="Piganeau G."/>
            <person name="Jancek S."/>
            <person name="Heijde M."/>
            <person name="Jabbari K."/>
            <person name="Bowler C."/>
            <person name="Lohr M."/>
            <person name="Robbens S."/>
            <person name="Werner G."/>
            <person name="Dubchak I."/>
            <person name="Pazour G.J."/>
            <person name="Ren Q."/>
            <person name="Paulsen I."/>
            <person name="Delwiche C."/>
            <person name="Schmutz J."/>
            <person name="Rokhsar D."/>
            <person name="Van de Peer Y."/>
            <person name="Moreau H."/>
            <person name="Grigoriev I.V."/>
        </authorList>
    </citation>
    <scope>NUCLEOTIDE SEQUENCE [LARGE SCALE GENOMIC DNA]</scope>
    <source>
        <strain>CCE9901</strain>
    </source>
</reference>
<organism>
    <name type="scientific">Ostreococcus lucimarinus (strain CCE9901)</name>
    <dbReference type="NCBI Taxonomy" id="436017"/>
    <lineage>
        <taxon>Eukaryota</taxon>
        <taxon>Viridiplantae</taxon>
        <taxon>Chlorophyta</taxon>
        <taxon>Mamiellophyceae</taxon>
        <taxon>Mamiellales</taxon>
        <taxon>Bathycoccaceae</taxon>
        <taxon>Ostreococcus</taxon>
    </lineage>
</organism>
<accession>A4SAD2</accession>